<comment type="function">
    <text evidence="1">Binds directly to 23S ribosomal RNA and is necessary for the in vitro assembly process of the 50S ribosomal subunit. It is not involved in the protein synthesizing functions of that subunit.</text>
</comment>
<comment type="similarity">
    <text evidence="1">Belongs to the bacterial ribosomal protein bL20 family.</text>
</comment>
<gene>
    <name evidence="1" type="primary">rplT</name>
    <name type="ordered locus">XOO3184</name>
</gene>
<protein>
    <recommendedName>
        <fullName evidence="1">Large ribosomal subunit protein bL20</fullName>
    </recommendedName>
    <alternativeName>
        <fullName evidence="2">50S ribosomal protein L20</fullName>
    </alternativeName>
</protein>
<feature type="chain" id="PRO_0000243760" description="Large ribosomal subunit protein bL20">
    <location>
        <begin position="1"/>
        <end position="119"/>
    </location>
</feature>
<organism>
    <name type="scientific">Xanthomonas oryzae pv. oryzae (strain KACC10331 / KXO85)</name>
    <dbReference type="NCBI Taxonomy" id="291331"/>
    <lineage>
        <taxon>Bacteria</taxon>
        <taxon>Pseudomonadati</taxon>
        <taxon>Pseudomonadota</taxon>
        <taxon>Gammaproteobacteria</taxon>
        <taxon>Lysobacterales</taxon>
        <taxon>Lysobacteraceae</taxon>
        <taxon>Xanthomonas</taxon>
    </lineage>
</organism>
<sequence length="119" mass="13355">MARVKRGVQARRRHKKILTLAKGYYNARRKVFRVAKQAVIKAQQYAYIGRKQKKRNFRSLWITRINAAARINGLSYSRFMNGLLKAGITLDRKVLADIAVHDAAGFAALAEKAKGALAA</sequence>
<name>RL20_XANOR</name>
<reference key="1">
    <citation type="journal article" date="2005" name="Nucleic Acids Res.">
        <title>The genome sequence of Xanthomonas oryzae pathovar oryzae KACC10331, the bacterial blight pathogen of rice.</title>
        <authorList>
            <person name="Lee B.-M."/>
            <person name="Park Y.-J."/>
            <person name="Park D.-S."/>
            <person name="Kang H.-W."/>
            <person name="Kim J.-G."/>
            <person name="Song E.-S."/>
            <person name="Park I.-C."/>
            <person name="Yoon U.-H."/>
            <person name="Hahn J.-H."/>
            <person name="Koo B.-S."/>
            <person name="Lee G.-B."/>
            <person name="Kim H."/>
            <person name="Park H.-S."/>
            <person name="Yoon K.-O."/>
            <person name="Kim J.-H."/>
            <person name="Jung C.-H."/>
            <person name="Koh N.-H."/>
            <person name="Seo J.-S."/>
            <person name="Go S.-J."/>
        </authorList>
    </citation>
    <scope>NUCLEOTIDE SEQUENCE [LARGE SCALE GENOMIC DNA]</scope>
    <source>
        <strain>KACC10331 / KXO85</strain>
    </source>
</reference>
<evidence type="ECO:0000255" key="1">
    <source>
        <dbReference type="HAMAP-Rule" id="MF_00382"/>
    </source>
</evidence>
<evidence type="ECO:0000305" key="2"/>
<proteinExistence type="inferred from homology"/>
<accession>Q5GXY3</accession>
<dbReference type="EMBL" id="AE013598">
    <property type="protein sequence ID" value="AAW76438.1"/>
    <property type="molecule type" value="Genomic_DNA"/>
</dbReference>
<dbReference type="SMR" id="Q5GXY3"/>
<dbReference type="STRING" id="291331.XOO3184"/>
<dbReference type="KEGG" id="xoo:XOO3184"/>
<dbReference type="HOGENOM" id="CLU_123265_0_1_6"/>
<dbReference type="Proteomes" id="UP000006735">
    <property type="component" value="Chromosome"/>
</dbReference>
<dbReference type="GO" id="GO:1990904">
    <property type="term" value="C:ribonucleoprotein complex"/>
    <property type="evidence" value="ECO:0007669"/>
    <property type="project" value="UniProtKB-KW"/>
</dbReference>
<dbReference type="GO" id="GO:0005840">
    <property type="term" value="C:ribosome"/>
    <property type="evidence" value="ECO:0007669"/>
    <property type="project" value="UniProtKB-KW"/>
</dbReference>
<dbReference type="GO" id="GO:0019843">
    <property type="term" value="F:rRNA binding"/>
    <property type="evidence" value="ECO:0007669"/>
    <property type="project" value="UniProtKB-UniRule"/>
</dbReference>
<dbReference type="GO" id="GO:0003735">
    <property type="term" value="F:structural constituent of ribosome"/>
    <property type="evidence" value="ECO:0007669"/>
    <property type="project" value="InterPro"/>
</dbReference>
<dbReference type="GO" id="GO:0000027">
    <property type="term" value="P:ribosomal large subunit assembly"/>
    <property type="evidence" value="ECO:0007669"/>
    <property type="project" value="UniProtKB-UniRule"/>
</dbReference>
<dbReference type="GO" id="GO:0006412">
    <property type="term" value="P:translation"/>
    <property type="evidence" value="ECO:0007669"/>
    <property type="project" value="InterPro"/>
</dbReference>
<dbReference type="CDD" id="cd07026">
    <property type="entry name" value="Ribosomal_L20"/>
    <property type="match status" value="1"/>
</dbReference>
<dbReference type="FunFam" id="1.10.1900.20:FF:000001">
    <property type="entry name" value="50S ribosomal protein L20"/>
    <property type="match status" value="1"/>
</dbReference>
<dbReference type="Gene3D" id="6.10.160.10">
    <property type="match status" value="1"/>
</dbReference>
<dbReference type="Gene3D" id="1.10.1900.20">
    <property type="entry name" value="Ribosomal protein L20"/>
    <property type="match status" value="1"/>
</dbReference>
<dbReference type="HAMAP" id="MF_00382">
    <property type="entry name" value="Ribosomal_bL20"/>
    <property type="match status" value="1"/>
</dbReference>
<dbReference type="InterPro" id="IPR005813">
    <property type="entry name" value="Ribosomal_bL20"/>
</dbReference>
<dbReference type="InterPro" id="IPR049946">
    <property type="entry name" value="RIBOSOMAL_L20_CS"/>
</dbReference>
<dbReference type="InterPro" id="IPR035566">
    <property type="entry name" value="Ribosomal_protein_bL20_C"/>
</dbReference>
<dbReference type="NCBIfam" id="TIGR01032">
    <property type="entry name" value="rplT_bact"/>
    <property type="match status" value="1"/>
</dbReference>
<dbReference type="PANTHER" id="PTHR10986">
    <property type="entry name" value="39S RIBOSOMAL PROTEIN L20"/>
    <property type="match status" value="1"/>
</dbReference>
<dbReference type="Pfam" id="PF00453">
    <property type="entry name" value="Ribosomal_L20"/>
    <property type="match status" value="1"/>
</dbReference>
<dbReference type="PRINTS" id="PR00062">
    <property type="entry name" value="RIBOSOMALL20"/>
</dbReference>
<dbReference type="SUPFAM" id="SSF74731">
    <property type="entry name" value="Ribosomal protein L20"/>
    <property type="match status" value="1"/>
</dbReference>
<dbReference type="PROSITE" id="PS00937">
    <property type="entry name" value="RIBOSOMAL_L20"/>
    <property type="match status" value="1"/>
</dbReference>
<keyword id="KW-1185">Reference proteome</keyword>
<keyword id="KW-0687">Ribonucleoprotein</keyword>
<keyword id="KW-0689">Ribosomal protein</keyword>
<keyword id="KW-0694">RNA-binding</keyword>
<keyword id="KW-0699">rRNA-binding</keyword>